<organism>
    <name type="scientific">Vitis vinifera</name>
    <name type="common">Grape</name>
    <dbReference type="NCBI Taxonomy" id="29760"/>
    <lineage>
        <taxon>Eukaryota</taxon>
        <taxon>Viridiplantae</taxon>
        <taxon>Streptophyta</taxon>
        <taxon>Embryophyta</taxon>
        <taxon>Tracheophyta</taxon>
        <taxon>Spermatophyta</taxon>
        <taxon>Magnoliopsida</taxon>
        <taxon>eudicotyledons</taxon>
        <taxon>Gunneridae</taxon>
        <taxon>Pentapetalae</taxon>
        <taxon>rosids</taxon>
        <taxon>Vitales</taxon>
        <taxon>Vitaceae</taxon>
        <taxon>Viteae</taxon>
        <taxon>Vitis</taxon>
    </lineage>
</organism>
<protein>
    <recommendedName>
        <fullName evidence="1">Small ribosomal subunit protein uS2c</fullName>
    </recommendedName>
    <alternativeName>
        <fullName>30S ribosomal protein S2, chloroplastic</fullName>
    </alternativeName>
</protein>
<name>RR2_VITVI</name>
<reference key="1">
    <citation type="journal article" date="2006" name="BMC Evol. Biol.">
        <title>Phylogenetic analyses of Vitis (Vitaceae) based on complete chloroplast genome sequences: effects of taxon sampling and phylogenetic methods on resolving relationships among rosids.</title>
        <authorList>
            <person name="Jansen R.K."/>
            <person name="Kaittanis C."/>
            <person name="Lee S.-B."/>
            <person name="Saski C."/>
            <person name="Tomkins J."/>
            <person name="Alverson A.J."/>
            <person name="Daniell H."/>
        </authorList>
    </citation>
    <scope>NUCLEOTIDE SEQUENCE [LARGE SCALE GENOMIC DNA]</scope>
    <source>
        <strain>cv. Maxxa</strain>
    </source>
</reference>
<feature type="chain" id="PRO_0000352163" description="Small ribosomal subunit protein uS2c">
    <location>
        <begin position="1"/>
        <end position="236"/>
    </location>
</feature>
<comment type="subcellular location">
    <subcellularLocation>
        <location>Plastid</location>
        <location>Chloroplast</location>
    </subcellularLocation>
</comment>
<comment type="similarity">
    <text evidence="1">Belongs to the universal ribosomal protein uS2 family.</text>
</comment>
<keyword id="KW-0150">Chloroplast</keyword>
<keyword id="KW-0934">Plastid</keyword>
<keyword id="KW-1185">Reference proteome</keyword>
<keyword id="KW-0687">Ribonucleoprotein</keyword>
<keyword id="KW-0689">Ribosomal protein</keyword>
<dbReference type="EMBL" id="DQ424856">
    <property type="protein sequence ID" value="ABE47523.1"/>
    <property type="molecule type" value="Genomic_DNA"/>
</dbReference>
<dbReference type="RefSeq" id="YP_567065.1">
    <property type="nucleotide sequence ID" value="NC_007957.1"/>
</dbReference>
<dbReference type="SMR" id="Q0ZJ31"/>
<dbReference type="FunCoup" id="Q0ZJ31">
    <property type="interactions" value="578"/>
</dbReference>
<dbReference type="STRING" id="29760.Q0ZJ31"/>
<dbReference type="GeneID" id="4025096"/>
<dbReference type="KEGG" id="vvi:4025096"/>
<dbReference type="InParanoid" id="Q0ZJ31"/>
<dbReference type="OrthoDB" id="617163at71240"/>
<dbReference type="Proteomes" id="UP000009183">
    <property type="component" value="Chloroplast"/>
</dbReference>
<dbReference type="GO" id="GO:0009507">
    <property type="term" value="C:chloroplast"/>
    <property type="evidence" value="ECO:0007669"/>
    <property type="project" value="UniProtKB-SubCell"/>
</dbReference>
<dbReference type="GO" id="GO:0005763">
    <property type="term" value="C:mitochondrial small ribosomal subunit"/>
    <property type="evidence" value="ECO:0000318"/>
    <property type="project" value="GO_Central"/>
</dbReference>
<dbReference type="GO" id="GO:0003735">
    <property type="term" value="F:structural constituent of ribosome"/>
    <property type="evidence" value="ECO:0000318"/>
    <property type="project" value="GO_Central"/>
</dbReference>
<dbReference type="GO" id="GO:0006412">
    <property type="term" value="P:translation"/>
    <property type="evidence" value="ECO:0007669"/>
    <property type="project" value="UniProtKB-UniRule"/>
</dbReference>
<dbReference type="CDD" id="cd01425">
    <property type="entry name" value="RPS2"/>
    <property type="match status" value="1"/>
</dbReference>
<dbReference type="FunFam" id="3.40.50.10490:FF:000101">
    <property type="match status" value="1"/>
</dbReference>
<dbReference type="FunFam" id="1.10.287.610:FF:000001">
    <property type="entry name" value="30S ribosomal protein S2"/>
    <property type="match status" value="1"/>
</dbReference>
<dbReference type="Gene3D" id="3.40.50.10490">
    <property type="entry name" value="Glucose-6-phosphate isomerase like protein, domain 1"/>
    <property type="match status" value="1"/>
</dbReference>
<dbReference type="Gene3D" id="1.10.287.610">
    <property type="entry name" value="Helix hairpin bin"/>
    <property type="match status" value="1"/>
</dbReference>
<dbReference type="HAMAP" id="MF_00291_B">
    <property type="entry name" value="Ribosomal_uS2_B"/>
    <property type="match status" value="1"/>
</dbReference>
<dbReference type="InterPro" id="IPR001865">
    <property type="entry name" value="Ribosomal_uS2"/>
</dbReference>
<dbReference type="InterPro" id="IPR005706">
    <property type="entry name" value="Ribosomal_uS2_bac/mit/plastid"/>
</dbReference>
<dbReference type="InterPro" id="IPR018130">
    <property type="entry name" value="Ribosomal_uS2_CS"/>
</dbReference>
<dbReference type="InterPro" id="IPR023591">
    <property type="entry name" value="Ribosomal_uS2_flav_dom_sf"/>
</dbReference>
<dbReference type="NCBIfam" id="TIGR01011">
    <property type="entry name" value="rpsB_bact"/>
    <property type="match status" value="1"/>
</dbReference>
<dbReference type="PANTHER" id="PTHR12534">
    <property type="entry name" value="30S RIBOSOMAL PROTEIN S2 PROKARYOTIC AND ORGANELLAR"/>
    <property type="match status" value="1"/>
</dbReference>
<dbReference type="PANTHER" id="PTHR12534:SF0">
    <property type="entry name" value="SMALL RIBOSOMAL SUBUNIT PROTEIN US2M"/>
    <property type="match status" value="1"/>
</dbReference>
<dbReference type="Pfam" id="PF00318">
    <property type="entry name" value="Ribosomal_S2"/>
    <property type="match status" value="1"/>
</dbReference>
<dbReference type="PRINTS" id="PR00395">
    <property type="entry name" value="RIBOSOMALS2"/>
</dbReference>
<dbReference type="SUPFAM" id="SSF52313">
    <property type="entry name" value="Ribosomal protein S2"/>
    <property type="match status" value="1"/>
</dbReference>
<dbReference type="PROSITE" id="PS00962">
    <property type="entry name" value="RIBOSOMAL_S2_1"/>
    <property type="match status" value="1"/>
</dbReference>
<dbReference type="PROSITE" id="PS00963">
    <property type="entry name" value="RIBOSOMAL_S2_2"/>
    <property type="match status" value="1"/>
</dbReference>
<proteinExistence type="inferred from homology"/>
<geneLocation type="chloroplast"/>
<evidence type="ECO:0000305" key="1"/>
<sequence length="236" mass="26781">MTRRYWNINLEEMMEAGVHFGHGTRKWNPRMAPYISAKRKGIHITNLTRTARFLSEACDLVFDAASRGKQFLIVGTKNKAADSVARAAIKARCHYVNKKWLGGMSTNWSTTETRLHKFRDLRTEQKTGRLNRLPKRDAAMLKRQLSHLQTYLGGIKYMTGLPDIVIIVDQQEEYTALRECITLGIPTICLIDTNCDPDLADISIPANDDAIASIRLILNKLVFAICEGRSSYIRNP</sequence>
<accession>Q0ZJ31</accession>
<gene>
    <name type="primary">rps2</name>
</gene>